<dbReference type="EC" id="3.1.26.4" evidence="1"/>
<dbReference type="EMBL" id="AE017143">
    <property type="protein sequence ID" value="AAP96053.1"/>
    <property type="molecule type" value="Genomic_DNA"/>
</dbReference>
<dbReference type="RefSeq" id="WP_010945102.1">
    <property type="nucleotide sequence ID" value="NC_002940.2"/>
</dbReference>
<dbReference type="SMR" id="Q7VM15"/>
<dbReference type="STRING" id="233412.HD_1206"/>
<dbReference type="KEGG" id="hdu:HD_1206"/>
<dbReference type="eggNOG" id="COG0328">
    <property type="taxonomic scope" value="Bacteria"/>
</dbReference>
<dbReference type="HOGENOM" id="CLU_030894_6_0_6"/>
<dbReference type="OrthoDB" id="7845843at2"/>
<dbReference type="Proteomes" id="UP000001022">
    <property type="component" value="Chromosome"/>
</dbReference>
<dbReference type="GO" id="GO:0005737">
    <property type="term" value="C:cytoplasm"/>
    <property type="evidence" value="ECO:0007669"/>
    <property type="project" value="UniProtKB-SubCell"/>
</dbReference>
<dbReference type="GO" id="GO:0000287">
    <property type="term" value="F:magnesium ion binding"/>
    <property type="evidence" value="ECO:0007669"/>
    <property type="project" value="UniProtKB-UniRule"/>
</dbReference>
<dbReference type="GO" id="GO:0003676">
    <property type="term" value="F:nucleic acid binding"/>
    <property type="evidence" value="ECO:0007669"/>
    <property type="project" value="InterPro"/>
</dbReference>
<dbReference type="GO" id="GO:0004523">
    <property type="term" value="F:RNA-DNA hybrid ribonuclease activity"/>
    <property type="evidence" value="ECO:0007669"/>
    <property type="project" value="UniProtKB-UniRule"/>
</dbReference>
<dbReference type="GO" id="GO:0043137">
    <property type="term" value="P:DNA replication, removal of RNA primer"/>
    <property type="evidence" value="ECO:0007669"/>
    <property type="project" value="TreeGrafter"/>
</dbReference>
<dbReference type="CDD" id="cd09278">
    <property type="entry name" value="RNase_HI_prokaryote_like"/>
    <property type="match status" value="1"/>
</dbReference>
<dbReference type="FunFam" id="3.30.420.10:FF:000008">
    <property type="entry name" value="Ribonuclease H"/>
    <property type="match status" value="1"/>
</dbReference>
<dbReference type="Gene3D" id="3.30.420.10">
    <property type="entry name" value="Ribonuclease H-like superfamily/Ribonuclease H"/>
    <property type="match status" value="1"/>
</dbReference>
<dbReference type="HAMAP" id="MF_00042">
    <property type="entry name" value="RNase_H"/>
    <property type="match status" value="1"/>
</dbReference>
<dbReference type="InterPro" id="IPR050092">
    <property type="entry name" value="RNase_H"/>
</dbReference>
<dbReference type="InterPro" id="IPR012337">
    <property type="entry name" value="RNaseH-like_sf"/>
</dbReference>
<dbReference type="InterPro" id="IPR002156">
    <property type="entry name" value="RNaseH_domain"/>
</dbReference>
<dbReference type="InterPro" id="IPR036397">
    <property type="entry name" value="RNaseH_sf"/>
</dbReference>
<dbReference type="InterPro" id="IPR022892">
    <property type="entry name" value="RNaseHI"/>
</dbReference>
<dbReference type="NCBIfam" id="NF001236">
    <property type="entry name" value="PRK00203.1"/>
    <property type="match status" value="1"/>
</dbReference>
<dbReference type="PANTHER" id="PTHR10642">
    <property type="entry name" value="RIBONUCLEASE H1"/>
    <property type="match status" value="1"/>
</dbReference>
<dbReference type="PANTHER" id="PTHR10642:SF26">
    <property type="entry name" value="RIBONUCLEASE H1"/>
    <property type="match status" value="1"/>
</dbReference>
<dbReference type="Pfam" id="PF00075">
    <property type="entry name" value="RNase_H"/>
    <property type="match status" value="1"/>
</dbReference>
<dbReference type="SUPFAM" id="SSF53098">
    <property type="entry name" value="Ribonuclease H-like"/>
    <property type="match status" value="1"/>
</dbReference>
<dbReference type="PROSITE" id="PS50879">
    <property type="entry name" value="RNASE_H_1"/>
    <property type="match status" value="1"/>
</dbReference>
<protein>
    <recommendedName>
        <fullName evidence="1">Ribonuclease HI</fullName>
        <shortName evidence="1">RNase HI</shortName>
        <ecNumber evidence="1">3.1.26.4</ecNumber>
    </recommendedName>
</protein>
<keyword id="KW-0963">Cytoplasm</keyword>
<keyword id="KW-0255">Endonuclease</keyword>
<keyword id="KW-0378">Hydrolase</keyword>
<keyword id="KW-0460">Magnesium</keyword>
<keyword id="KW-0479">Metal-binding</keyword>
<keyword id="KW-0540">Nuclease</keyword>
<keyword id="KW-1185">Reference proteome</keyword>
<sequence>MKSVNIFTDGSCLGNPGPGGIGVVLRYNQHQKKVSQGYFQTTNNRMELRAVIEGLSMLKEACNVTLYSDSQYMKNGITKWIFKWKKSNWKTANGKAVKNKDLWLLLDEKIQIHYIEWKWVKGHSGHYENEICDELAKLGANNPTLEDVGYQPA</sequence>
<gene>
    <name evidence="1" type="primary">rnhA</name>
    <name type="ordered locus">HD_1206</name>
</gene>
<organism>
    <name type="scientific">Haemophilus ducreyi (strain 35000HP / ATCC 700724)</name>
    <dbReference type="NCBI Taxonomy" id="233412"/>
    <lineage>
        <taxon>Bacteria</taxon>
        <taxon>Pseudomonadati</taxon>
        <taxon>Pseudomonadota</taxon>
        <taxon>Gammaproteobacteria</taxon>
        <taxon>Pasteurellales</taxon>
        <taxon>Pasteurellaceae</taxon>
        <taxon>Haemophilus</taxon>
    </lineage>
</organism>
<name>RNH_HAEDU</name>
<evidence type="ECO:0000255" key="1">
    <source>
        <dbReference type="HAMAP-Rule" id="MF_00042"/>
    </source>
</evidence>
<evidence type="ECO:0000255" key="2">
    <source>
        <dbReference type="PROSITE-ProRule" id="PRU00408"/>
    </source>
</evidence>
<proteinExistence type="inferred from homology"/>
<reference key="1">
    <citation type="submission" date="2003-06" db="EMBL/GenBank/DDBJ databases">
        <title>The complete genome sequence of Haemophilus ducreyi.</title>
        <authorList>
            <person name="Munson R.S. Jr."/>
            <person name="Ray W.C."/>
            <person name="Mahairas G."/>
            <person name="Sabo P."/>
            <person name="Mungur R."/>
            <person name="Johnson L."/>
            <person name="Nguyen D."/>
            <person name="Wang J."/>
            <person name="Forst C."/>
            <person name="Hood L."/>
        </authorList>
    </citation>
    <scope>NUCLEOTIDE SEQUENCE [LARGE SCALE GENOMIC DNA]</scope>
    <source>
        <strain>35000HP / ATCC 700724</strain>
    </source>
</reference>
<accession>Q7VM15</accession>
<comment type="function">
    <text evidence="1">Endonuclease that specifically degrades the RNA of RNA-DNA hybrids.</text>
</comment>
<comment type="catalytic activity">
    <reaction evidence="1">
        <text>Endonucleolytic cleavage to 5'-phosphomonoester.</text>
        <dbReference type="EC" id="3.1.26.4"/>
    </reaction>
</comment>
<comment type="cofactor">
    <cofactor evidence="1">
        <name>Mg(2+)</name>
        <dbReference type="ChEBI" id="CHEBI:18420"/>
    </cofactor>
    <text evidence="1">Binds 1 Mg(2+) ion per subunit. May bind a second metal ion at a regulatory site, or after substrate binding.</text>
</comment>
<comment type="subunit">
    <text evidence="1">Monomer.</text>
</comment>
<comment type="subcellular location">
    <subcellularLocation>
        <location evidence="1">Cytoplasm</location>
    </subcellularLocation>
</comment>
<comment type="similarity">
    <text evidence="1">Belongs to the RNase H family.</text>
</comment>
<feature type="chain" id="PRO_0000195376" description="Ribonuclease HI">
    <location>
        <begin position="1"/>
        <end position="153"/>
    </location>
</feature>
<feature type="domain" description="RNase H type-1" evidence="2">
    <location>
        <begin position="1"/>
        <end position="141"/>
    </location>
</feature>
<feature type="binding site" evidence="1">
    <location>
        <position position="9"/>
    </location>
    <ligand>
        <name>Mg(2+)</name>
        <dbReference type="ChEBI" id="CHEBI:18420"/>
        <label>1</label>
    </ligand>
</feature>
<feature type="binding site" evidence="1">
    <location>
        <position position="9"/>
    </location>
    <ligand>
        <name>Mg(2+)</name>
        <dbReference type="ChEBI" id="CHEBI:18420"/>
        <label>2</label>
    </ligand>
</feature>
<feature type="binding site" evidence="1">
    <location>
        <position position="47"/>
    </location>
    <ligand>
        <name>Mg(2+)</name>
        <dbReference type="ChEBI" id="CHEBI:18420"/>
        <label>1</label>
    </ligand>
</feature>
<feature type="binding site" evidence="1">
    <location>
        <position position="69"/>
    </location>
    <ligand>
        <name>Mg(2+)</name>
        <dbReference type="ChEBI" id="CHEBI:18420"/>
        <label>1</label>
    </ligand>
</feature>
<feature type="binding site" evidence="1">
    <location>
        <position position="133"/>
    </location>
    <ligand>
        <name>Mg(2+)</name>
        <dbReference type="ChEBI" id="CHEBI:18420"/>
        <label>2</label>
    </ligand>
</feature>